<gene>
    <name evidence="35" type="primary">ABI4</name>
    <name type="synonym">ERF052</name>
    <name evidence="31" type="synonym">GIN6</name>
    <name evidence="33" type="synonym">ISI3</name>
    <name evidence="30" type="synonym">SAN5</name>
    <name evidence="32" type="synonym">SIS5</name>
    <name evidence="34" type="synonym">SUN6</name>
    <name evidence="37" type="ordered locus">At2g40220</name>
    <name evidence="38" type="ORF">T7M7.16</name>
</gene>
<name>ABI4_ARATH</name>
<evidence type="ECO:0000255" key="1">
    <source>
        <dbReference type="PROSITE-ProRule" id="PRU00366"/>
    </source>
</evidence>
<evidence type="ECO:0000255" key="2">
    <source>
        <dbReference type="PROSITE-ProRule" id="PRU00768"/>
    </source>
</evidence>
<evidence type="ECO:0000256" key="3">
    <source>
        <dbReference type="SAM" id="MobiDB-lite"/>
    </source>
</evidence>
<evidence type="ECO:0000269" key="4">
    <source>
    </source>
</evidence>
<evidence type="ECO:0000269" key="5">
    <source>
    </source>
</evidence>
<evidence type="ECO:0000269" key="6">
    <source>
    </source>
</evidence>
<evidence type="ECO:0000269" key="7">
    <source>
    </source>
</evidence>
<evidence type="ECO:0000269" key="8">
    <source>
    </source>
</evidence>
<evidence type="ECO:0000269" key="9">
    <source>
    </source>
</evidence>
<evidence type="ECO:0000269" key="10">
    <source>
    </source>
</evidence>
<evidence type="ECO:0000269" key="11">
    <source>
    </source>
</evidence>
<evidence type="ECO:0000269" key="12">
    <source>
    </source>
</evidence>
<evidence type="ECO:0000269" key="13">
    <source>
    </source>
</evidence>
<evidence type="ECO:0000269" key="14">
    <source>
    </source>
</evidence>
<evidence type="ECO:0000269" key="15">
    <source>
    </source>
</evidence>
<evidence type="ECO:0000269" key="16">
    <source>
    </source>
</evidence>
<evidence type="ECO:0000269" key="17">
    <source>
    </source>
</evidence>
<evidence type="ECO:0000269" key="18">
    <source>
    </source>
</evidence>
<evidence type="ECO:0000269" key="19">
    <source>
    </source>
</evidence>
<evidence type="ECO:0000269" key="20">
    <source>
    </source>
</evidence>
<evidence type="ECO:0000269" key="21">
    <source>
    </source>
</evidence>
<evidence type="ECO:0000269" key="22">
    <source>
    </source>
</evidence>
<evidence type="ECO:0000269" key="23">
    <source>
    </source>
</evidence>
<evidence type="ECO:0000269" key="24">
    <source>
    </source>
</evidence>
<evidence type="ECO:0000269" key="25">
    <source>
    </source>
</evidence>
<evidence type="ECO:0000269" key="26">
    <source>
    </source>
</evidence>
<evidence type="ECO:0000269" key="27">
    <source>
    </source>
</evidence>
<evidence type="ECO:0000269" key="28">
    <source>
    </source>
</evidence>
<evidence type="ECO:0000269" key="29">
    <source>
    </source>
</evidence>
<evidence type="ECO:0000303" key="30">
    <source>
    </source>
</evidence>
<evidence type="ECO:0000303" key="31">
    <source>
    </source>
</evidence>
<evidence type="ECO:0000303" key="32">
    <source>
    </source>
</evidence>
<evidence type="ECO:0000303" key="33">
    <source>
    </source>
</evidence>
<evidence type="ECO:0000303" key="34">
    <source>
    </source>
</evidence>
<evidence type="ECO:0000303" key="35">
    <source>
    </source>
</evidence>
<evidence type="ECO:0000305" key="36"/>
<evidence type="ECO:0000312" key="37">
    <source>
        <dbReference type="Araport" id="AT2G40220"/>
    </source>
</evidence>
<evidence type="ECO:0000312" key="38">
    <source>
        <dbReference type="EMBL" id="AAD25937.1"/>
    </source>
</evidence>
<protein>
    <recommendedName>
        <fullName evidence="35">Ethylene-responsive transcription factor ABI4</fullName>
        <shortName evidence="35">ERF ABI4</shortName>
    </recommendedName>
    <alternativeName>
        <fullName evidence="35">Protein ABSCISIC ACID INSENSITIVE 4</fullName>
    </alternativeName>
    <alternativeName>
        <fullName evidence="31">Protein GLUCOSE INSENSITIVE 6</fullName>
    </alternativeName>
    <alternativeName>
        <fullName evidence="33">Protein IMPAIRED SUCROSE INDUCTION 3</fullName>
    </alternativeName>
    <alternativeName>
        <fullName evidence="30">Protein SALOBRENO 5</fullName>
    </alternativeName>
    <alternativeName>
        <fullName evidence="34">Protein SUCROSE UNCOUPLED 6</fullName>
    </alternativeName>
    <alternativeName>
        <fullName evidence="32">Protein SUGAR INSENSITIVE 5</fullName>
    </alternativeName>
</protein>
<sequence>MDPLASQHQHNHLEDNNQTLTHNNPQSDSTTDSSTSSAQRKRKGKGGPDNSKFRYRGVRQRSWGKWVAEIREPRKRTRKWLGTFATAEDAARAYDRAAVYLYGSRAQLNLTPSSPSSVSSSSSSVSAASSPSTSSSSTQTLRPLLPRPAAATVGGGANFGPYGIPFNNNIFLNGGTSMLCPSYGFFPQQQQQQNQMVQMGQFQHQQYQNLHSNTNNNKISDIELTDVPVTNSTSFHHEVALGQEQGGSGCNNNSSMEDLNSLAGSVGSSLSITHPPPLVDPVCSMGLDPGYMVGDGSSTIWPFGGEEEYSHNWGSIWDFIDPILGEFY</sequence>
<proteinExistence type="evidence at protein level"/>
<reference key="1">
    <citation type="journal article" date="1998" name="Plant Cell">
        <title>The Arabidopsis abscisic acid response locus ABI4 encodes an APETALA 2 domain protein.</title>
        <authorList>
            <person name="Finkelstein R.R."/>
            <person name="Wang M.L."/>
            <person name="Lynch T.J."/>
            <person name="Rao S."/>
            <person name="Goodman H.M."/>
        </authorList>
    </citation>
    <scope>NUCLEOTIDE SEQUENCE [GENOMIC DNA]</scope>
    <scope>FUNCTION</scope>
    <scope>TISSUE SPECIFICITY</scope>
    <source>
        <strain>cv. Columbia</strain>
    </source>
</reference>
<reference key="2">
    <citation type="journal article" date="1999" name="Genome Res.">
        <title>A cluster of ABA-regulated genes on Arabidopsis thaliana BAC T07M07.</title>
        <authorList>
            <person name="Wang M.L."/>
            <person name="Belmonte S."/>
            <person name="Kim U."/>
            <person name="Dolan M."/>
            <person name="Morris J.W."/>
            <person name="Goodman H.M."/>
        </authorList>
    </citation>
    <scope>NUCLEOTIDE SEQUENCE [GENOMIC DNA]</scope>
</reference>
<reference key="3">
    <citation type="submission" date="2004-02" db="EMBL/GenBank/DDBJ databases">
        <title>Molecular cloning, expression, phylogenetic and functional characterization of the Arabidopsis AP2/EREBP transcription factor family.</title>
        <authorList>
            <person name="Pan Y."/>
            <person name="Gong W."/>
            <person name="Liu D."/>
            <person name="Fu Q."/>
            <person name="Mei W.-Q."/>
            <person name="Song W.-Q."/>
            <person name="Ma L.-G."/>
            <person name="Luo J.-C."/>
            <person name="Deng X.-W."/>
            <person name="Zhu Y.-X."/>
        </authorList>
    </citation>
    <scope>NUCLEOTIDE SEQUENCE [MRNA]</scope>
</reference>
<reference key="4">
    <citation type="journal article" date="1999" name="Nature">
        <title>Sequence and analysis of chromosome 2 of the plant Arabidopsis thaliana.</title>
        <authorList>
            <person name="Lin X."/>
            <person name="Kaul S."/>
            <person name="Rounsley S.D."/>
            <person name="Shea T.P."/>
            <person name="Benito M.-I."/>
            <person name="Town C.D."/>
            <person name="Fujii C.Y."/>
            <person name="Mason T.M."/>
            <person name="Bowman C.L."/>
            <person name="Barnstead M.E."/>
            <person name="Feldblyum T.V."/>
            <person name="Buell C.R."/>
            <person name="Ketchum K.A."/>
            <person name="Lee J.J."/>
            <person name="Ronning C.M."/>
            <person name="Koo H.L."/>
            <person name="Moffat K.S."/>
            <person name="Cronin L.A."/>
            <person name="Shen M."/>
            <person name="Pai G."/>
            <person name="Van Aken S."/>
            <person name="Umayam L."/>
            <person name="Tallon L.J."/>
            <person name="Gill J.E."/>
            <person name="Adams M.D."/>
            <person name="Carrera A.J."/>
            <person name="Creasy T.H."/>
            <person name="Goodman H.M."/>
            <person name="Somerville C.R."/>
            <person name="Copenhaver G.P."/>
            <person name="Preuss D."/>
            <person name="Nierman W.C."/>
            <person name="White O."/>
            <person name="Eisen J.A."/>
            <person name="Salzberg S.L."/>
            <person name="Fraser C.M."/>
            <person name="Venter J.C."/>
        </authorList>
    </citation>
    <scope>NUCLEOTIDE SEQUENCE [LARGE SCALE GENOMIC DNA]</scope>
    <source>
        <strain>cv. Columbia</strain>
    </source>
</reference>
<reference key="5">
    <citation type="journal article" date="2017" name="Plant J.">
        <title>Araport11: a complete reannotation of the Arabidopsis thaliana reference genome.</title>
        <authorList>
            <person name="Cheng C.Y."/>
            <person name="Krishnakumar V."/>
            <person name="Chan A.P."/>
            <person name="Thibaud-Nissen F."/>
            <person name="Schobel S."/>
            <person name="Town C.D."/>
        </authorList>
    </citation>
    <scope>GENOME REANNOTATION</scope>
    <source>
        <strain>cv. Columbia</strain>
    </source>
</reference>
<reference key="6">
    <citation type="journal article" date="2006" name="Plant Biotechnol. J.">
        <title>Simultaneous high-throughput recombinational cloning of open reading frames in closed and open configurations.</title>
        <authorList>
            <person name="Underwood B.A."/>
            <person name="Vanderhaeghen R."/>
            <person name="Whitford R."/>
            <person name="Town C.D."/>
            <person name="Hilson P."/>
        </authorList>
    </citation>
    <scope>NUCLEOTIDE SEQUENCE [LARGE SCALE MRNA]</scope>
    <source>
        <strain>cv. Columbia</strain>
    </source>
</reference>
<reference key="7">
    <citation type="journal article" date="1997" name="Plant Cell">
        <title>Sucrose control of phytochrome A signaling in Arabidopsis.</title>
        <authorList>
            <person name="Dijkwel P.P."/>
            <person name="Huijser C."/>
            <person name="Weisbeek P.J."/>
            <person name="Chua N.-H."/>
            <person name="Smeekens S.C.M."/>
        </authorList>
    </citation>
    <scope>FUNCTION</scope>
</reference>
<reference key="8">
    <citation type="journal article" date="1997" name="Plant J.">
        <title>An Arabidopsis mutant showing reduced feedback inhibition of photosynthesis.</title>
        <authorList>
            <person name="Van Oosten J.-J.M."/>
            <person name="Gerbaud A."/>
            <person name="Huijser C."/>
            <person name="Dijkwel P.P."/>
            <person name="Chua N.-H."/>
            <person name="Smeekens S.C.M."/>
        </authorList>
    </citation>
    <scope>FUNCTION</scope>
</reference>
<reference key="9">
    <citation type="journal article" date="2000" name="Genetics">
        <title>Genetic analysis of salt-tolerant mutants in Arabidopsis thaliana.</title>
        <authorList>
            <person name="Quesada V."/>
            <person name="Ponce M.R."/>
            <person name="Micol J.L."/>
        </authorList>
    </citation>
    <scope>FUNCTION</scope>
</reference>
<reference key="10">
    <citation type="journal article" date="2000" name="Genes Dev.">
        <title>Analysis of Arabidopsis glucose insensitive mutants, gin5 and gin6, reveals a central role of the plant hormone ABA in the regulation of plant vegetative development by sugar.</title>
        <authorList>
            <person name="Arenas-Huertero F."/>
            <person name="Arroyo A."/>
            <person name="Zhou L."/>
            <person name="Sheen J."/>
            <person name="Leon P."/>
        </authorList>
    </citation>
    <scope>FUNCTION</scope>
</reference>
<reference key="11">
    <citation type="journal article" date="2000" name="Plant Physiol.">
        <title>Regulation and function of the Arabidopsis ABA-insensitive4 gene in seed and abscisic acid response signaling networks.</title>
        <authorList>
            <person name="Soederman E.M."/>
            <person name="Brocard I.M."/>
            <person name="Lynch T.J."/>
            <person name="Finkelstein R.R."/>
        </authorList>
    </citation>
    <scope>FUNCTION</scope>
    <scope>DEVELOPMENTAL STAGE</scope>
    <scope>TISSUE SPECIFICITY</scope>
</reference>
<reference key="12">
    <citation type="journal article" date="2000" name="Plant J.">
        <title>The Arabidopsis SUCROSE UNCOUPLED-6 gene is identical to ABSCISIC ACID INSENSITIVE-4: involvement of abscisic acid in sugar responses.</title>
        <authorList>
            <person name="Huijser C."/>
            <person name="Kortstee A."/>
            <person name="Pego J."/>
            <person name="Weisbeek P.J."/>
            <person name="Wisman E."/>
            <person name="Smeekens S."/>
        </authorList>
    </citation>
    <scope>FUNCTION</scope>
</reference>
<reference key="13">
    <citation type="journal article" date="2000" name="Plant J.">
        <title>The Arabidopsis sugar-insensitive mutants sis4 and sis5 are defective in abscisic acid synthesis and response.</title>
        <authorList>
            <person name="Laby R.J."/>
            <person name="Kincaid M.S."/>
            <person name="Kim D."/>
            <person name="Gibson S.I."/>
        </authorList>
    </citation>
    <scope>FUNCTION</scope>
    <scope>MUTAGENESIS OF GLU-69</scope>
</reference>
<reference key="14">
    <citation type="journal article" date="2001" name="Plant J.">
        <title>Impaired sucrose-induction mutants reveal the modulation of sugar-induced starch biosynthetic gene expression by abscisic acid signalling.</title>
        <authorList>
            <person name="Rook F."/>
            <person name="Corke F."/>
            <person name="Card R."/>
            <person name="Munz G."/>
            <person name="Smith C."/>
            <person name="Bevan M.W."/>
        </authorList>
    </citation>
    <scope>FUNCTION</scope>
    <scope>MUTAGENESIS OF GLU-69</scope>
</reference>
<reference key="15">
    <citation type="journal article" date="2001" name="Plant J.">
        <title>ABA plays a central role in mediating the regulatory effects of nitrate on root branching in Arabidopsis.</title>
        <authorList>
            <person name="Signora L."/>
            <person name="De Smet I."/>
            <person name="Foyer C.H."/>
            <person name="Zhang H."/>
        </authorList>
    </citation>
    <scope>FUNCTION</scope>
</reference>
<reference key="16">
    <citation type="journal article" date="2001" name="Proc. Natl. Acad. Sci. U.S.A.">
        <title>Plastid redox state and sugars: interactive regulators of nuclear-encoded photosynthetic gene expression.</title>
        <authorList>
            <person name="Oswald O."/>
            <person name="Martin T."/>
            <person name="Dominy P.J."/>
            <person name="Graham I.A."/>
        </authorList>
    </citation>
    <scope>FUNCTION</scope>
</reference>
<reference key="17">
    <citation type="journal article" date="2002" name="BMC Plant Biol.">
        <title>Mobilization of seed storage lipid by Arabidopsis seedlings is retarded in the presence of exogenous sugars.</title>
        <authorList>
            <person name="To J.P.C."/>
            <person name="Reiter W.-D."/>
            <person name="Gibson S.I."/>
        </authorList>
    </citation>
    <scope>FUNCTION</scope>
</reference>
<reference key="18">
    <citation type="journal article" date="2002" name="Genetics">
        <title>A screen for genes that function in abscisic acid signaling in Arabidopsis thaliana.</title>
        <authorList>
            <person name="Nambara E."/>
            <person name="Suzuki M."/>
            <person name="Abrams S."/>
            <person name="McCarty D.R."/>
            <person name="Kamiya Y."/>
            <person name="McCourt P."/>
        </authorList>
    </citation>
    <scope>FUNCTION</scope>
</reference>
<reference key="19">
    <citation type="journal article" date="2003" name="Plant Physiol.">
        <title>Regulatory networks in seeds integrating developmental, abscisic acid, sugar, and light signaling.</title>
        <authorList>
            <person name="Brocard-Gifford I.M."/>
            <person name="Lynch T.J."/>
            <person name="Finkelstein R.R."/>
        </authorList>
    </citation>
    <scope>FUNCTION</scope>
</reference>
<reference key="20">
    <citation type="journal article" date="2003" name="Plant Physiol.">
        <title>Mechanisms of glucose signaling during germination of Arabidopsis.</title>
        <authorList>
            <person name="Price J."/>
            <person name="Li T.-C."/>
            <person name="Kang S.G."/>
            <person name="Na J.K."/>
            <person name="Jang J.-C."/>
        </authorList>
    </citation>
    <scope>FUNCTION</scope>
    <scope>INDUCTION BY IMBIBITION AND GLUCOSE</scope>
</reference>
<reference key="21">
    <citation type="journal article" date="2003" name="Plant Physiol.">
        <title>Three genes that affect sugar sensing (abscisic acid insensitive 4, abscisic acid insensitive 5, and constitutive triple response 1) are differentially regulated by glucose in Arabidopsis.</title>
        <authorList>
            <person name="Arroyo A."/>
            <person name="Bossi F."/>
            <person name="Finkelstein R.R."/>
            <person name="Leon P."/>
        </authorList>
    </citation>
    <scope>INDUCTION</scope>
    <scope>DEVELOPMENTAL STAGE</scope>
    <scope>TISSUE SPECIFICITY</scope>
</reference>
<reference key="22">
    <citation type="journal article" date="2004" name="Planta">
        <title>Interactions of abscisic acid and sugar signalling in the regulation of leaf senescence.</title>
        <authorList>
            <person name="Pourtau N."/>
            <person name="Mares M."/>
            <person name="Purdy S."/>
            <person name="Quentin N."/>
            <person name="Rueel A."/>
            <person name="Wingler A."/>
        </authorList>
    </citation>
    <scope>FUNCTION</scope>
</reference>
<reference key="23">
    <citation type="journal article" date="2004" name="Plant J.">
        <title>Beta-amino-butyric acid-induced resistance against necrotrophic pathogens is based on ABA-dependent priming for callose.</title>
        <authorList>
            <person name="Ton J."/>
            <person name="Mauch-Mani B."/>
        </authorList>
    </citation>
    <scope>FUNCTION</scope>
</reference>
<reference key="24">
    <citation type="journal article" date="2004" name="Plant Physiol.">
        <title>Oxalate production by Sclerotinia sclerotiorum deregulates guard cells during infection.</title>
        <authorList>
            <person name="Guimaraes R.L."/>
            <person name="Stotz H.U."/>
        </authorList>
    </citation>
    <scope>FUNCTION</scope>
</reference>
<reference key="25">
    <citation type="journal article" date="2005" name="Plant J.">
        <title>Sugar and ABA responsiveness of a minimal RBCS light-responsive unit is mediated by direct binding of ABI4.</title>
        <authorList>
            <person name="Acevedo-Hernandez G.J."/>
            <person name="Leon P."/>
            <person name="Herrera-Estrella L.R."/>
        </authorList>
    </citation>
    <scope>FUNCTION</scope>
</reference>
<reference key="26">
    <citation type="journal article" date="2005" name="Plant Physiol.">
        <title>Enhancing Arabidopsis salt and drought stress tolerance by chemical priming for its abscisic acid responses.</title>
        <authorList>
            <person name="Jakab G."/>
            <person name="Ton J."/>
            <person name="Flors V."/>
            <person name="Zimmerli L."/>
            <person name="Metraux J.-P."/>
            <person name="Mauch-Mani B."/>
        </authorList>
    </citation>
    <scope>FUNCTION</scope>
</reference>
<reference key="27">
    <citation type="journal article" date="2006" name="J. Exp. Bot.">
        <title>Role of abscisic acid (ABA) and Arabidopsis thaliana ABA-insensitive loci in low water potential-induced ABA and proline accumulation.</title>
        <authorList>
            <person name="Verslues P.E."/>
            <person name="Bray E.A."/>
        </authorList>
    </citation>
    <scope>FUNCTION</scope>
</reference>
<reference key="28">
    <citation type="journal article" date="2006" name="Plant Cell">
        <title>Arabidopsis ABA INSENSITIVE4 regulates lipid mobilization in the embryo and reveals repression of seed germination by the endosperm.</title>
        <authorList>
            <person name="Penfield S."/>
            <person name="Li Y."/>
            <person name="Gilday A.D."/>
            <person name="Graham S."/>
            <person name="Graham I.A."/>
        </authorList>
    </citation>
    <scope>FUNCTION</scope>
    <scope>TISSUE SPECIFICITY</scope>
</reference>
<reference key="29">
    <citation type="journal article" date="2006" name="Plant Physiol.">
        <title>Genome-wide analysis of the ERF gene family in Arabidopsis and rice.</title>
        <authorList>
            <person name="Nakano T."/>
            <person name="Suzuki K."/>
            <person name="Fujimura T."/>
            <person name="Shinshi H."/>
        </authorList>
    </citation>
    <scope>GENE FAMILY</scope>
    <scope>NOMENCLATURE</scope>
</reference>
<reference key="30">
    <citation type="journal article" date="2007" name="Development">
        <title>The role of Arabidopsis SCAR genes in ARP2-ARP3-dependent cell morphogenesis.</title>
        <authorList>
            <person name="Uhrig J.F."/>
            <person name="Mutondo M."/>
            <person name="Zimmermann I."/>
            <person name="Deeks M.J."/>
            <person name="Machesky L.M."/>
            <person name="Thomas P."/>
            <person name="Uhrig S."/>
            <person name="Rambke C."/>
            <person name="Hussey P.J."/>
            <person name="Huelskamp M."/>
        </authorList>
    </citation>
    <scope>INTERACTION WITH SPK1; SCAR2 AND SCAR3</scope>
</reference>
<reference key="31">
    <citation type="journal article" date="2007" name="Plant Mol. Biol.">
        <title>ABI4 mediates the effects of exogenous trehalose on Arabidopsis growth and starch breakdown.</title>
        <authorList>
            <person name="Ramon M."/>
            <person name="Rolland F."/>
            <person name="Thevelein J.M."/>
            <person name="van Dijck P."/>
            <person name="Leyman B."/>
        </authorList>
    </citation>
    <scope>FUNCTION</scope>
    <scope>INDUCTION BY TREHALOSE</scope>
</reference>
<reference key="32">
    <citation type="journal article" date="2014" name="Nat. Commun.">
        <title>MED18 interaction with distinct transcription factors regulates multiple plant functions.</title>
        <authorList>
            <person name="Lai Z."/>
            <person name="Schluttenhofer C.M."/>
            <person name="Bhide K."/>
            <person name="Shreve J."/>
            <person name="Thimmapuram J."/>
            <person name="Lee S.Y."/>
            <person name="Yun D.-J."/>
            <person name="Mengiste T."/>
        </authorList>
    </citation>
    <scope>INTERACTION WITH MED18</scope>
    <scope>SUBCELLULAR LOCATION</scope>
    <source>
        <strain>cv. Columbia</strain>
    </source>
</reference>
<accession>A0MES8</accession>
<accession>O81138</accession>
<accession>Q6J9N5</accession>
<organism>
    <name type="scientific">Arabidopsis thaliana</name>
    <name type="common">Mouse-ear cress</name>
    <dbReference type="NCBI Taxonomy" id="3702"/>
    <lineage>
        <taxon>Eukaryota</taxon>
        <taxon>Viridiplantae</taxon>
        <taxon>Streptophyta</taxon>
        <taxon>Embryophyta</taxon>
        <taxon>Tracheophyta</taxon>
        <taxon>Spermatophyta</taxon>
        <taxon>Magnoliopsida</taxon>
        <taxon>eudicotyledons</taxon>
        <taxon>Gunneridae</taxon>
        <taxon>Pentapetalae</taxon>
        <taxon>rosids</taxon>
        <taxon>malvids</taxon>
        <taxon>Brassicales</taxon>
        <taxon>Brassicaceae</taxon>
        <taxon>Camelineae</taxon>
        <taxon>Arabidopsis</taxon>
    </lineage>
</organism>
<comment type="function">
    <text evidence="4 5 6 7 8 9 10 11 12 13 14 15 17 18 19 20 21 22 23 24 27 28 29">Transcription regulator that probably binds to the GCC-box pathogenesis-related promoter element. Also binds to the S-box (5'-CACTTCCA-3') photosynthesis-associated nuclear genes-related (PhANGs-related) promoter element, and thus acts as a transcription inhibitor. Involved in the regulation of gene expression by stress factors and by components of stress signal transduction pathways. May have a function in the deetiolation process. Confers sensitivity to abscisic acid (ABA), and regulates the ABA signaling pathway during seed germination, upon nitrate-mediated lateral root inhibition, in hexokinase-dependent sugar responses (including feed-back regulation of photosynthesis and mobilization of storage lipid during germination), and in response to osmotic stress mediated by NaCl, KCl or mannitol. Plays a role in sucrose sensing or signaling, especially at low fluence far red light. Also involved in plant response to glucose treatment, especially at low concentration and in young seedlings. Required for the trehalose-mediated root inhibition and starch accumulation in cotyledons, probably by inhibiting starch breakdown. However, seems to not be involved in sugar-mediated senescence. Required for the ABA-dependent beta-amino-butyric acid (BABA) signaling pathway. BABA primes ABA synthesis and promotes resistance to drought and salt, and leads to a prime callose accumulation that confers resistance against necrotrophic pathogens such as A.brassicicola and P.cucumerina. Seems to be involved in resistance to S.sclerotiorum probably by regulating the ABA-mediated stomatal closure apparently by antagonistic interaction with oxalate. Negative regulator of low water potential-induced Pro accumulation whose effect is decreased by high levels of sugar.</text>
</comment>
<comment type="subunit">
    <text evidence="25 26">Interacts with SPK1, SCAR2 and SCAR3 (PubMed:17267444). Binds to MED18 to regulate abscisic acid responses; recruits MED18 to ABI5 promoter in the presence of abscisic acid (ABA) (PubMed:24451981).</text>
</comment>
<comment type="subcellular location">
    <subcellularLocation>
        <location evidence="1 2 26">Nucleus</location>
    </subcellularLocation>
</comment>
<comment type="tissue specificity">
    <text evidence="8 16 23 29">In seeds, mostly in embryo, and seedlings, especially in vascular tissues. Confined to the hypocotyl, cotyledons, the root cap, and the root quiescent center.</text>
</comment>
<comment type="developmental stage">
    <text evidence="8 16">Levels increase in embryos from globular stage onward during seed maturation. In seedlings, levels in cotyledons and hypocotyls decrease progressively to disappear 3 days after germination, except after glucose treatment that makes levels constant.</text>
</comment>
<comment type="induction">
    <text evidence="15 16 24">Only in young seedlings by ABA, imbibition, glucose, 2-deoxy-glucose (2DG), trehalose, and osmotic stress.</text>
</comment>
<comment type="miscellaneous">
    <text>'Salobreno' means 'salty land' in Spanish. Plants lacking ABI4 are salt tolerant.</text>
</comment>
<comment type="similarity">
    <text evidence="36">Belongs to the AP2/ERF transcription factor family. ERF subfamily.</text>
</comment>
<comment type="sequence caution" evidence="36">
    <conflict type="erroneous termination">
        <sequence resource="EMBL-CDS" id="ABK28529"/>
    </conflict>
    <text>Extended C-terminus.</text>
</comment>
<keyword id="KW-0938">Abscisic acid signaling pathway</keyword>
<keyword id="KW-0238">DNA-binding</keyword>
<keyword id="KW-0936">Ethylene signaling pathway</keyword>
<keyword id="KW-0539">Nucleus</keyword>
<keyword id="KW-0611">Plant defense</keyword>
<keyword id="KW-1185">Reference proteome</keyword>
<keyword id="KW-0678">Repressor</keyword>
<keyword id="KW-0346">Stress response</keyword>
<keyword id="KW-0804">Transcription</keyword>
<keyword id="KW-0805">Transcription regulation</keyword>
<feature type="chain" id="PRO_0000297916" description="Ethylene-responsive transcription factor ABI4">
    <location>
        <begin position="1"/>
        <end position="328"/>
    </location>
</feature>
<feature type="DNA-binding region" description="AP2/ERF" evidence="1">
    <location>
        <begin position="54"/>
        <end position="111"/>
    </location>
</feature>
<feature type="region of interest" description="Disordered" evidence="3">
    <location>
        <begin position="1"/>
        <end position="56"/>
    </location>
</feature>
<feature type="region of interest" description="Disordered" evidence="3">
    <location>
        <begin position="111"/>
        <end position="141"/>
    </location>
</feature>
<feature type="short sequence motif" description="Nuclear localization signal" evidence="2">
    <location>
        <begin position="41"/>
        <end position="48"/>
    </location>
</feature>
<feature type="compositionally biased region" description="Polar residues" evidence="3">
    <location>
        <begin position="16"/>
        <end position="26"/>
    </location>
</feature>
<feature type="compositionally biased region" description="Low complexity" evidence="3">
    <location>
        <begin position="27"/>
        <end position="37"/>
    </location>
</feature>
<feature type="compositionally biased region" description="Low complexity" evidence="3">
    <location>
        <begin position="113"/>
        <end position="138"/>
    </location>
</feature>
<feature type="mutagenesis site" description="In abi4-104/sis5-4; impaired ABA signaling pathway in response to sucrose." evidence="7 10">
    <original>E</original>
    <variation>K</variation>
    <location>
        <position position="69"/>
    </location>
</feature>
<feature type="sequence conflict" description="In Ref. 3; AAT44957." evidence="36" ref="3">
    <original>P</original>
    <variation>L</variation>
    <location>
        <position position="3"/>
    </location>
</feature>
<feature type="sequence conflict" description="In Ref. 3; AAT44957." evidence="36" ref="3">
    <location>
        <position position="193"/>
    </location>
</feature>
<feature type="sequence conflict" description="In Ref. 3; AAT44957." evidence="36" ref="3">
    <original>T</original>
    <variation>A</variation>
    <location>
        <position position="230"/>
    </location>
</feature>
<dbReference type="EMBL" id="AF040959">
    <property type="protein sequence ID" value="AAC39489.1"/>
    <property type="molecule type" value="Genomic_DNA"/>
</dbReference>
<dbReference type="EMBL" id="AF085279">
    <property type="protein sequence ID" value="AAD25937.1"/>
    <property type="molecule type" value="Genomic_DNA"/>
</dbReference>
<dbReference type="EMBL" id="AY560890">
    <property type="protein sequence ID" value="AAT44957.1"/>
    <property type="molecule type" value="mRNA"/>
</dbReference>
<dbReference type="EMBL" id="CP002685">
    <property type="protein sequence ID" value="AEC09798.1"/>
    <property type="molecule type" value="Genomic_DNA"/>
</dbReference>
<dbReference type="EMBL" id="DQ446612">
    <property type="protein sequence ID" value="ABE65896.1"/>
    <property type="molecule type" value="mRNA"/>
</dbReference>
<dbReference type="EMBL" id="DQ653050">
    <property type="protein sequence ID" value="ABK28529.1"/>
    <property type="status" value="ALT_SEQ"/>
    <property type="molecule type" value="mRNA"/>
</dbReference>
<dbReference type="PIR" id="G84826">
    <property type="entry name" value="G84826"/>
</dbReference>
<dbReference type="RefSeq" id="NP_181551.1">
    <property type="nucleotide sequence ID" value="NM_129580.2"/>
</dbReference>
<dbReference type="SMR" id="A0MES8"/>
<dbReference type="BioGRID" id="3952">
    <property type="interactions" value="10"/>
</dbReference>
<dbReference type="FunCoup" id="A0MES8">
    <property type="interactions" value="21"/>
</dbReference>
<dbReference type="STRING" id="3702.A0MES8"/>
<dbReference type="PaxDb" id="3702-AT2G40220.1"/>
<dbReference type="EnsemblPlants" id="AT2G40220.1">
    <property type="protein sequence ID" value="AT2G40220.1"/>
    <property type="gene ID" value="AT2G40220"/>
</dbReference>
<dbReference type="GeneID" id="818614"/>
<dbReference type="Gramene" id="AT2G40220.1">
    <property type="protein sequence ID" value="AT2G40220.1"/>
    <property type="gene ID" value="AT2G40220"/>
</dbReference>
<dbReference type="KEGG" id="ath:AT2G40220"/>
<dbReference type="Araport" id="AT2G40220"/>
<dbReference type="TAIR" id="AT2G40220">
    <property type="gene designation" value="ABI4"/>
</dbReference>
<dbReference type="eggNOG" id="ENOG502QT85">
    <property type="taxonomic scope" value="Eukaryota"/>
</dbReference>
<dbReference type="HOGENOM" id="CLU_055535_0_0_1"/>
<dbReference type="InParanoid" id="A0MES8"/>
<dbReference type="OMA" id="MDPLASQ"/>
<dbReference type="PhylomeDB" id="A0MES8"/>
<dbReference type="PRO" id="PR:A0MES8"/>
<dbReference type="Proteomes" id="UP000006548">
    <property type="component" value="Chromosome 2"/>
</dbReference>
<dbReference type="ExpressionAtlas" id="A0MES8">
    <property type="expression patterns" value="baseline and differential"/>
</dbReference>
<dbReference type="GO" id="GO:0005634">
    <property type="term" value="C:nucleus"/>
    <property type="evidence" value="ECO:0000314"/>
    <property type="project" value="UniProtKB"/>
</dbReference>
<dbReference type="GO" id="GO:0003677">
    <property type="term" value="F:DNA binding"/>
    <property type="evidence" value="ECO:0000314"/>
    <property type="project" value="TAIR"/>
</dbReference>
<dbReference type="GO" id="GO:0003700">
    <property type="term" value="F:DNA-binding transcription factor activity"/>
    <property type="evidence" value="ECO:0000250"/>
    <property type="project" value="TAIR"/>
</dbReference>
<dbReference type="GO" id="GO:0043565">
    <property type="term" value="F:sequence-specific DNA binding"/>
    <property type="evidence" value="ECO:0000353"/>
    <property type="project" value="TAIR"/>
</dbReference>
<dbReference type="GO" id="GO:0000976">
    <property type="term" value="F:transcription cis-regulatory region binding"/>
    <property type="evidence" value="ECO:0000314"/>
    <property type="project" value="TAIR"/>
</dbReference>
<dbReference type="GO" id="GO:0009738">
    <property type="term" value="P:abscisic acid-activated signaling pathway"/>
    <property type="evidence" value="ECO:0000315"/>
    <property type="project" value="TAIR"/>
</dbReference>
<dbReference type="GO" id="GO:0006952">
    <property type="term" value="P:defense response"/>
    <property type="evidence" value="ECO:0007669"/>
    <property type="project" value="UniProtKB-KW"/>
</dbReference>
<dbReference type="GO" id="GO:0009873">
    <property type="term" value="P:ethylene-activated signaling pathway"/>
    <property type="evidence" value="ECO:0007669"/>
    <property type="project" value="UniProtKB-KW"/>
</dbReference>
<dbReference type="GO" id="GO:0048527">
    <property type="term" value="P:lateral root development"/>
    <property type="evidence" value="ECO:0000315"/>
    <property type="project" value="TAIR"/>
</dbReference>
<dbReference type="GO" id="GO:0031930">
    <property type="term" value="P:mitochondria-nucleus signaling pathway"/>
    <property type="evidence" value="ECO:0000314"/>
    <property type="project" value="TAIR"/>
</dbReference>
<dbReference type="GO" id="GO:0045893">
    <property type="term" value="P:positive regulation of DNA-templated transcription"/>
    <property type="evidence" value="ECO:0000314"/>
    <property type="project" value="TAIR"/>
</dbReference>
<dbReference type="GO" id="GO:2000082">
    <property type="term" value="P:regulation of L-ascorbic acid biosynthetic process"/>
    <property type="evidence" value="ECO:0000314"/>
    <property type="project" value="TAIR"/>
</dbReference>
<dbReference type="GO" id="GO:0032880">
    <property type="term" value="P:regulation of protein localization"/>
    <property type="evidence" value="ECO:0000314"/>
    <property type="project" value="TAIR"/>
</dbReference>
<dbReference type="GO" id="GO:0010119">
    <property type="term" value="P:regulation of stomatal movement"/>
    <property type="evidence" value="ECO:0000316"/>
    <property type="project" value="TAIR"/>
</dbReference>
<dbReference type="GO" id="GO:0010896">
    <property type="term" value="P:regulation of triglyceride catabolic process"/>
    <property type="evidence" value="ECO:0000315"/>
    <property type="project" value="TAIR"/>
</dbReference>
<dbReference type="GO" id="GO:0009749">
    <property type="term" value="P:response to glucose"/>
    <property type="evidence" value="ECO:0000315"/>
    <property type="project" value="TAIR"/>
</dbReference>
<dbReference type="GO" id="GO:0006970">
    <property type="term" value="P:response to osmotic stress"/>
    <property type="evidence" value="ECO:0000315"/>
    <property type="project" value="TAIR"/>
</dbReference>
<dbReference type="GO" id="GO:0009744">
    <property type="term" value="P:response to sucrose"/>
    <property type="evidence" value="ECO:0000270"/>
    <property type="project" value="TAIR"/>
</dbReference>
<dbReference type="GO" id="GO:0010353">
    <property type="term" value="P:response to trehalose"/>
    <property type="evidence" value="ECO:0000315"/>
    <property type="project" value="TAIR"/>
</dbReference>
<dbReference type="GO" id="GO:0009414">
    <property type="term" value="P:response to water deprivation"/>
    <property type="evidence" value="ECO:0000315"/>
    <property type="project" value="TAIR"/>
</dbReference>
<dbReference type="GO" id="GO:0010449">
    <property type="term" value="P:root meristem growth"/>
    <property type="evidence" value="ECO:0000315"/>
    <property type="project" value="TAIR"/>
</dbReference>
<dbReference type="GO" id="GO:0048316">
    <property type="term" value="P:seed development"/>
    <property type="evidence" value="ECO:0000315"/>
    <property type="project" value="TAIR"/>
</dbReference>
<dbReference type="GO" id="GO:0005983">
    <property type="term" value="P:starch catabolic process"/>
    <property type="evidence" value="ECO:0000303"/>
    <property type="project" value="TAIR"/>
</dbReference>
<dbReference type="GO" id="GO:0010182">
    <property type="term" value="P:sugar mediated signaling pathway"/>
    <property type="evidence" value="ECO:0000304"/>
    <property type="project" value="TAIR"/>
</dbReference>
<dbReference type="CDD" id="cd00018">
    <property type="entry name" value="AP2"/>
    <property type="match status" value="1"/>
</dbReference>
<dbReference type="FunFam" id="3.30.730.10:FF:000001">
    <property type="entry name" value="Ethylene-responsive transcription factor 2"/>
    <property type="match status" value="1"/>
</dbReference>
<dbReference type="Gene3D" id="3.30.730.10">
    <property type="entry name" value="AP2/ERF domain"/>
    <property type="match status" value="1"/>
</dbReference>
<dbReference type="InterPro" id="IPR001471">
    <property type="entry name" value="AP2/ERF_dom"/>
</dbReference>
<dbReference type="InterPro" id="IPR036955">
    <property type="entry name" value="AP2/ERF_dom_sf"/>
</dbReference>
<dbReference type="InterPro" id="IPR016177">
    <property type="entry name" value="DNA-bd_dom_sf"/>
</dbReference>
<dbReference type="PANTHER" id="PTHR31241">
    <property type="entry name" value="DEHYDRATION-RESPONSIVE ELEMENT-BINDING PROTEIN 2C"/>
    <property type="match status" value="1"/>
</dbReference>
<dbReference type="PANTHER" id="PTHR31241:SF24">
    <property type="entry name" value="ETHYLENE-RESPONSIVE TRANSCRIPTION FACTOR ABI4"/>
    <property type="match status" value="1"/>
</dbReference>
<dbReference type="Pfam" id="PF00847">
    <property type="entry name" value="AP2"/>
    <property type="match status" value="1"/>
</dbReference>
<dbReference type="PRINTS" id="PR00367">
    <property type="entry name" value="ETHRSPELEMNT"/>
</dbReference>
<dbReference type="SMART" id="SM00380">
    <property type="entry name" value="AP2"/>
    <property type="match status" value="1"/>
</dbReference>
<dbReference type="SUPFAM" id="SSF54171">
    <property type="entry name" value="DNA-binding domain"/>
    <property type="match status" value="1"/>
</dbReference>
<dbReference type="PROSITE" id="PS51032">
    <property type="entry name" value="AP2_ERF"/>
    <property type="match status" value="1"/>
</dbReference>